<organism>
    <name type="scientific">Stenotrophomonas maltophilia (strain R551-3)</name>
    <dbReference type="NCBI Taxonomy" id="391008"/>
    <lineage>
        <taxon>Bacteria</taxon>
        <taxon>Pseudomonadati</taxon>
        <taxon>Pseudomonadota</taxon>
        <taxon>Gammaproteobacteria</taxon>
        <taxon>Lysobacterales</taxon>
        <taxon>Lysobacteraceae</taxon>
        <taxon>Stenotrophomonas</taxon>
        <taxon>Stenotrophomonas maltophilia group</taxon>
    </lineage>
</organism>
<sequence>MDLTDTQQAILQLIAERIESEGAPPSQTEIARAFGFKGVRAAQYHLEALEQAGAIRRIPGQARGIRLVQAPPLEKLAEPGLPDNVLRLPVLGRVAAGLPIGADIGSDDFVVLDRVFFSPAPDYLLKVQGDSMIDEGIFDGDLIGVHRTRDAHSGQIVVARIDDEITVKLLKIAKDRIRLLPRNPDYKPIEVLPDQDFSIEGLYCGLLRPNR</sequence>
<proteinExistence type="inferred from homology"/>
<gene>
    <name evidence="1" type="primary">lexA</name>
    <name type="ordered locus">Smal_1475</name>
</gene>
<feature type="chain" id="PRO_1000089600" description="LexA repressor">
    <location>
        <begin position="1"/>
        <end position="211"/>
    </location>
</feature>
<feature type="DNA-binding region" description="H-T-H motif" evidence="1">
    <location>
        <begin position="27"/>
        <end position="47"/>
    </location>
</feature>
<feature type="active site" description="For autocatalytic cleavage activity" evidence="1">
    <location>
        <position position="131"/>
    </location>
</feature>
<feature type="active site" description="For autocatalytic cleavage activity" evidence="1">
    <location>
        <position position="168"/>
    </location>
</feature>
<feature type="site" description="Cleavage; by autolysis" evidence="1">
    <location>
        <begin position="96"/>
        <end position="97"/>
    </location>
</feature>
<comment type="function">
    <text evidence="1">Represses a number of genes involved in the response to DNA damage (SOS response), including recA and lexA. In the presence of single-stranded DNA, RecA interacts with LexA causing an autocatalytic cleavage which disrupts the DNA-binding part of LexA, leading to derepression of the SOS regulon and eventually DNA repair.</text>
</comment>
<comment type="catalytic activity">
    <reaction evidence="1">
        <text>Hydrolysis of Ala-|-Gly bond in repressor LexA.</text>
        <dbReference type="EC" id="3.4.21.88"/>
    </reaction>
</comment>
<comment type="subunit">
    <text evidence="1">Homodimer.</text>
</comment>
<comment type="similarity">
    <text evidence="1">Belongs to the peptidase S24 family.</text>
</comment>
<name>LEXA_STRM5</name>
<accession>B4SRA9</accession>
<keyword id="KW-0068">Autocatalytic cleavage</keyword>
<keyword id="KW-0227">DNA damage</keyword>
<keyword id="KW-0234">DNA repair</keyword>
<keyword id="KW-0235">DNA replication</keyword>
<keyword id="KW-0238">DNA-binding</keyword>
<keyword id="KW-0378">Hydrolase</keyword>
<keyword id="KW-0678">Repressor</keyword>
<keyword id="KW-0742">SOS response</keyword>
<keyword id="KW-0804">Transcription</keyword>
<keyword id="KW-0805">Transcription regulation</keyword>
<protein>
    <recommendedName>
        <fullName evidence="1">LexA repressor</fullName>
        <ecNumber evidence="1">3.4.21.88</ecNumber>
    </recommendedName>
</protein>
<dbReference type="EC" id="3.4.21.88" evidence="1"/>
<dbReference type="EMBL" id="CP001111">
    <property type="protein sequence ID" value="ACF51180.1"/>
    <property type="molecule type" value="Genomic_DNA"/>
</dbReference>
<dbReference type="RefSeq" id="WP_012510665.1">
    <property type="nucleotide sequence ID" value="NC_011071.1"/>
</dbReference>
<dbReference type="SMR" id="B4SRA9"/>
<dbReference type="STRING" id="391008.Smal_1475"/>
<dbReference type="MEROPS" id="S24.001"/>
<dbReference type="KEGG" id="smt:Smal_1475"/>
<dbReference type="eggNOG" id="COG1974">
    <property type="taxonomic scope" value="Bacteria"/>
</dbReference>
<dbReference type="HOGENOM" id="CLU_066192_45_3_6"/>
<dbReference type="OrthoDB" id="9802364at2"/>
<dbReference type="Proteomes" id="UP000001867">
    <property type="component" value="Chromosome"/>
</dbReference>
<dbReference type="GO" id="GO:0003677">
    <property type="term" value="F:DNA binding"/>
    <property type="evidence" value="ECO:0007669"/>
    <property type="project" value="UniProtKB-UniRule"/>
</dbReference>
<dbReference type="GO" id="GO:0004252">
    <property type="term" value="F:serine-type endopeptidase activity"/>
    <property type="evidence" value="ECO:0007669"/>
    <property type="project" value="UniProtKB-UniRule"/>
</dbReference>
<dbReference type="GO" id="GO:0006281">
    <property type="term" value="P:DNA repair"/>
    <property type="evidence" value="ECO:0007669"/>
    <property type="project" value="UniProtKB-UniRule"/>
</dbReference>
<dbReference type="GO" id="GO:0006260">
    <property type="term" value="P:DNA replication"/>
    <property type="evidence" value="ECO:0007669"/>
    <property type="project" value="UniProtKB-UniRule"/>
</dbReference>
<dbReference type="GO" id="GO:0045892">
    <property type="term" value="P:negative regulation of DNA-templated transcription"/>
    <property type="evidence" value="ECO:0007669"/>
    <property type="project" value="UniProtKB-UniRule"/>
</dbReference>
<dbReference type="GO" id="GO:0006508">
    <property type="term" value="P:proteolysis"/>
    <property type="evidence" value="ECO:0007669"/>
    <property type="project" value="InterPro"/>
</dbReference>
<dbReference type="GO" id="GO:0009432">
    <property type="term" value="P:SOS response"/>
    <property type="evidence" value="ECO:0007669"/>
    <property type="project" value="UniProtKB-UniRule"/>
</dbReference>
<dbReference type="CDD" id="cd06529">
    <property type="entry name" value="S24_LexA-like"/>
    <property type="match status" value="1"/>
</dbReference>
<dbReference type="FunFam" id="1.10.10.10:FF:000009">
    <property type="entry name" value="LexA repressor"/>
    <property type="match status" value="1"/>
</dbReference>
<dbReference type="FunFam" id="2.10.109.10:FF:000001">
    <property type="entry name" value="LexA repressor"/>
    <property type="match status" value="1"/>
</dbReference>
<dbReference type="Gene3D" id="2.10.109.10">
    <property type="entry name" value="Umud Fragment, subunit A"/>
    <property type="match status" value="1"/>
</dbReference>
<dbReference type="Gene3D" id="1.10.10.10">
    <property type="entry name" value="Winged helix-like DNA-binding domain superfamily/Winged helix DNA-binding domain"/>
    <property type="match status" value="1"/>
</dbReference>
<dbReference type="HAMAP" id="MF_00015">
    <property type="entry name" value="LexA"/>
    <property type="match status" value="1"/>
</dbReference>
<dbReference type="InterPro" id="IPR006200">
    <property type="entry name" value="LexA"/>
</dbReference>
<dbReference type="InterPro" id="IPR039418">
    <property type="entry name" value="LexA-like"/>
</dbReference>
<dbReference type="InterPro" id="IPR036286">
    <property type="entry name" value="LexA/Signal_pep-like_sf"/>
</dbReference>
<dbReference type="InterPro" id="IPR006199">
    <property type="entry name" value="LexA_DNA-bd_dom"/>
</dbReference>
<dbReference type="InterPro" id="IPR050077">
    <property type="entry name" value="LexA_repressor"/>
</dbReference>
<dbReference type="InterPro" id="IPR006197">
    <property type="entry name" value="Peptidase_S24_LexA"/>
</dbReference>
<dbReference type="InterPro" id="IPR015927">
    <property type="entry name" value="Peptidase_S24_S26A/B/C"/>
</dbReference>
<dbReference type="InterPro" id="IPR036388">
    <property type="entry name" value="WH-like_DNA-bd_sf"/>
</dbReference>
<dbReference type="InterPro" id="IPR036390">
    <property type="entry name" value="WH_DNA-bd_sf"/>
</dbReference>
<dbReference type="NCBIfam" id="TIGR00498">
    <property type="entry name" value="lexA"/>
    <property type="match status" value="1"/>
</dbReference>
<dbReference type="PANTHER" id="PTHR33516">
    <property type="entry name" value="LEXA REPRESSOR"/>
    <property type="match status" value="1"/>
</dbReference>
<dbReference type="PANTHER" id="PTHR33516:SF2">
    <property type="entry name" value="LEXA REPRESSOR-RELATED"/>
    <property type="match status" value="1"/>
</dbReference>
<dbReference type="Pfam" id="PF01726">
    <property type="entry name" value="LexA_DNA_bind"/>
    <property type="match status" value="1"/>
</dbReference>
<dbReference type="Pfam" id="PF00717">
    <property type="entry name" value="Peptidase_S24"/>
    <property type="match status" value="1"/>
</dbReference>
<dbReference type="PRINTS" id="PR00726">
    <property type="entry name" value="LEXASERPTASE"/>
</dbReference>
<dbReference type="SUPFAM" id="SSF51306">
    <property type="entry name" value="LexA/Signal peptidase"/>
    <property type="match status" value="1"/>
</dbReference>
<dbReference type="SUPFAM" id="SSF46785">
    <property type="entry name" value="Winged helix' DNA-binding domain"/>
    <property type="match status" value="1"/>
</dbReference>
<reference key="1">
    <citation type="submission" date="2008-06" db="EMBL/GenBank/DDBJ databases">
        <title>Complete sequence of Stenotrophomonas maltophilia R551-3.</title>
        <authorList>
            <consortium name="US DOE Joint Genome Institute"/>
            <person name="Lucas S."/>
            <person name="Copeland A."/>
            <person name="Lapidus A."/>
            <person name="Glavina del Rio T."/>
            <person name="Dalin E."/>
            <person name="Tice H."/>
            <person name="Pitluck S."/>
            <person name="Chain P."/>
            <person name="Malfatti S."/>
            <person name="Shin M."/>
            <person name="Vergez L."/>
            <person name="Lang D."/>
            <person name="Schmutz J."/>
            <person name="Larimer F."/>
            <person name="Land M."/>
            <person name="Hauser L."/>
            <person name="Kyrpides N."/>
            <person name="Mikhailova N."/>
            <person name="Taghavi S."/>
            <person name="Monchy S."/>
            <person name="Newman L."/>
            <person name="Vangronsveld J."/>
            <person name="van der Lelie D."/>
            <person name="Richardson P."/>
        </authorList>
    </citation>
    <scope>NUCLEOTIDE SEQUENCE [LARGE SCALE GENOMIC DNA]</scope>
    <source>
        <strain>R551-3</strain>
    </source>
</reference>
<evidence type="ECO:0000255" key="1">
    <source>
        <dbReference type="HAMAP-Rule" id="MF_00015"/>
    </source>
</evidence>